<reference key="1">
    <citation type="submission" date="2007-04" db="EMBL/GenBank/DDBJ databases">
        <title>Complete genome sequence of the nitrogen-fixing bacterium Azorhizobium caulinodans ORS571.</title>
        <authorList>
            <person name="Lee K.B."/>
            <person name="Backer P.D."/>
            <person name="Aono T."/>
            <person name="Liu C.T."/>
            <person name="Suzuki S."/>
            <person name="Suzuki T."/>
            <person name="Kaneko T."/>
            <person name="Yamada M."/>
            <person name="Tabata S."/>
            <person name="Kupfer D.M."/>
            <person name="Najar F.Z."/>
            <person name="Wiley G.B."/>
            <person name="Roe B."/>
            <person name="Binnewies T."/>
            <person name="Ussery D."/>
            <person name="Vereecke D."/>
            <person name="Gevers D."/>
            <person name="Holsters M."/>
            <person name="Oyaizu H."/>
        </authorList>
    </citation>
    <scope>NUCLEOTIDE SEQUENCE [LARGE SCALE GENOMIC DNA]</scope>
    <source>
        <strain>ATCC 43989 / DSM 5975 / JCM 20966 / LMG 6465 / NBRC 14845 / NCIMB 13405 / ORS 571</strain>
    </source>
</reference>
<gene>
    <name evidence="2" type="primary">rpsL</name>
    <name type="ordered locus">AZC_2559</name>
</gene>
<proteinExistence type="inferred from homology"/>
<dbReference type="EMBL" id="AP009384">
    <property type="protein sequence ID" value="BAF88557.1"/>
    <property type="molecule type" value="Genomic_DNA"/>
</dbReference>
<dbReference type="RefSeq" id="WP_012171083.1">
    <property type="nucleotide sequence ID" value="NC_009937.1"/>
</dbReference>
<dbReference type="SMR" id="A8IAT8"/>
<dbReference type="STRING" id="438753.AZC_2559"/>
<dbReference type="KEGG" id="azc:AZC_2559"/>
<dbReference type="eggNOG" id="COG0048">
    <property type="taxonomic scope" value="Bacteria"/>
</dbReference>
<dbReference type="HOGENOM" id="CLU_104295_1_2_5"/>
<dbReference type="Proteomes" id="UP000000270">
    <property type="component" value="Chromosome"/>
</dbReference>
<dbReference type="GO" id="GO:0015935">
    <property type="term" value="C:small ribosomal subunit"/>
    <property type="evidence" value="ECO:0007669"/>
    <property type="project" value="InterPro"/>
</dbReference>
<dbReference type="GO" id="GO:0019843">
    <property type="term" value="F:rRNA binding"/>
    <property type="evidence" value="ECO:0007669"/>
    <property type="project" value="UniProtKB-UniRule"/>
</dbReference>
<dbReference type="GO" id="GO:0003735">
    <property type="term" value="F:structural constituent of ribosome"/>
    <property type="evidence" value="ECO:0007669"/>
    <property type="project" value="InterPro"/>
</dbReference>
<dbReference type="GO" id="GO:0000049">
    <property type="term" value="F:tRNA binding"/>
    <property type="evidence" value="ECO:0007669"/>
    <property type="project" value="UniProtKB-UniRule"/>
</dbReference>
<dbReference type="GO" id="GO:0006412">
    <property type="term" value="P:translation"/>
    <property type="evidence" value="ECO:0007669"/>
    <property type="project" value="UniProtKB-UniRule"/>
</dbReference>
<dbReference type="CDD" id="cd03368">
    <property type="entry name" value="Ribosomal_S12"/>
    <property type="match status" value="1"/>
</dbReference>
<dbReference type="FunFam" id="2.40.50.140:FF:000001">
    <property type="entry name" value="30S ribosomal protein S12"/>
    <property type="match status" value="1"/>
</dbReference>
<dbReference type="Gene3D" id="2.40.50.140">
    <property type="entry name" value="Nucleic acid-binding proteins"/>
    <property type="match status" value="1"/>
</dbReference>
<dbReference type="HAMAP" id="MF_00403_B">
    <property type="entry name" value="Ribosomal_uS12_B"/>
    <property type="match status" value="1"/>
</dbReference>
<dbReference type="InterPro" id="IPR012340">
    <property type="entry name" value="NA-bd_OB-fold"/>
</dbReference>
<dbReference type="InterPro" id="IPR006032">
    <property type="entry name" value="Ribosomal_uS12"/>
</dbReference>
<dbReference type="InterPro" id="IPR005679">
    <property type="entry name" value="Ribosomal_uS12_bac"/>
</dbReference>
<dbReference type="NCBIfam" id="TIGR00981">
    <property type="entry name" value="rpsL_bact"/>
    <property type="match status" value="1"/>
</dbReference>
<dbReference type="PANTHER" id="PTHR11652">
    <property type="entry name" value="30S RIBOSOMAL PROTEIN S12 FAMILY MEMBER"/>
    <property type="match status" value="1"/>
</dbReference>
<dbReference type="Pfam" id="PF00164">
    <property type="entry name" value="Ribosom_S12_S23"/>
    <property type="match status" value="1"/>
</dbReference>
<dbReference type="PIRSF" id="PIRSF002133">
    <property type="entry name" value="Ribosomal_S12/S23"/>
    <property type="match status" value="1"/>
</dbReference>
<dbReference type="PRINTS" id="PR01034">
    <property type="entry name" value="RIBOSOMALS12"/>
</dbReference>
<dbReference type="SUPFAM" id="SSF50249">
    <property type="entry name" value="Nucleic acid-binding proteins"/>
    <property type="match status" value="1"/>
</dbReference>
<dbReference type="PROSITE" id="PS00055">
    <property type="entry name" value="RIBOSOMAL_S12"/>
    <property type="match status" value="1"/>
</dbReference>
<keyword id="KW-0488">Methylation</keyword>
<keyword id="KW-1185">Reference proteome</keyword>
<keyword id="KW-0687">Ribonucleoprotein</keyword>
<keyword id="KW-0689">Ribosomal protein</keyword>
<keyword id="KW-0694">RNA-binding</keyword>
<keyword id="KW-0699">rRNA-binding</keyword>
<keyword id="KW-0820">tRNA-binding</keyword>
<comment type="function">
    <text evidence="2">With S4 and S5 plays an important role in translational accuracy.</text>
</comment>
<comment type="function">
    <text evidence="2">Interacts with and stabilizes bases of the 16S rRNA that are involved in tRNA selection in the A site and with the mRNA backbone. Located at the interface of the 30S and 50S subunits, it traverses the body of the 30S subunit contacting proteins on the other side and probably holding the rRNA structure together. The combined cluster of proteins S8, S12 and S17 appears to hold together the shoulder and platform of the 30S subunit.</text>
</comment>
<comment type="subunit">
    <text evidence="2">Part of the 30S ribosomal subunit. Contacts proteins S8 and S17. May interact with IF1 in the 30S initiation complex.</text>
</comment>
<comment type="similarity">
    <text evidence="2">Belongs to the universal ribosomal protein uS12 family.</text>
</comment>
<evidence type="ECO:0000250" key="1"/>
<evidence type="ECO:0000255" key="2">
    <source>
        <dbReference type="HAMAP-Rule" id="MF_00403"/>
    </source>
</evidence>
<evidence type="ECO:0000256" key="3">
    <source>
        <dbReference type="SAM" id="MobiDB-lite"/>
    </source>
</evidence>
<evidence type="ECO:0000305" key="4"/>
<protein>
    <recommendedName>
        <fullName evidence="2">Small ribosomal subunit protein uS12</fullName>
    </recommendedName>
    <alternativeName>
        <fullName evidence="4">30S ribosomal protein S12</fullName>
    </alternativeName>
</protein>
<organism>
    <name type="scientific">Azorhizobium caulinodans (strain ATCC 43989 / DSM 5975 / JCM 20966 / LMG 6465 / NBRC 14845 / NCIMB 13405 / ORS 571)</name>
    <dbReference type="NCBI Taxonomy" id="438753"/>
    <lineage>
        <taxon>Bacteria</taxon>
        <taxon>Pseudomonadati</taxon>
        <taxon>Pseudomonadota</taxon>
        <taxon>Alphaproteobacteria</taxon>
        <taxon>Hyphomicrobiales</taxon>
        <taxon>Xanthobacteraceae</taxon>
        <taxon>Azorhizobium</taxon>
    </lineage>
</organism>
<name>RS12_AZOC5</name>
<accession>A8IAT8</accession>
<feature type="chain" id="PRO_1000072252" description="Small ribosomal subunit protein uS12">
    <location>
        <begin position="1"/>
        <end position="123"/>
    </location>
</feature>
<feature type="region of interest" description="Disordered" evidence="3">
    <location>
        <begin position="1"/>
        <end position="32"/>
    </location>
</feature>
<feature type="compositionally biased region" description="Basic and acidic residues" evidence="3">
    <location>
        <begin position="10"/>
        <end position="21"/>
    </location>
</feature>
<feature type="modified residue" description="3-methylthioaspartic acid" evidence="1">
    <location>
        <position position="89"/>
    </location>
</feature>
<sequence length="123" mass="13924">MPTINQLIRKPREAQKARDKAPALQSSPQKRGVCTRVYTTTPKKPNSALRKVAKVRLTNSYEVIGYIPGEGHNLQEHSVVMIRGGRVKDLPGVRYHILRGVLDTQGVKNRKQRRSKYGAKRPK</sequence>